<evidence type="ECO:0000250" key="1"/>
<evidence type="ECO:0000250" key="2">
    <source>
        <dbReference type="UniProtKB" id="P11155"/>
    </source>
</evidence>
<evidence type="ECO:0000305" key="3"/>
<name>PPDK2_ORYSJ</name>
<comment type="function">
    <text>Formation of phosphoenolpyruvate.</text>
</comment>
<comment type="catalytic activity">
    <reaction>
        <text>pyruvate + phosphate + ATP = phosphoenolpyruvate + AMP + diphosphate + H(+)</text>
        <dbReference type="Rhea" id="RHEA:10756"/>
        <dbReference type="ChEBI" id="CHEBI:15361"/>
        <dbReference type="ChEBI" id="CHEBI:15378"/>
        <dbReference type="ChEBI" id="CHEBI:30616"/>
        <dbReference type="ChEBI" id="CHEBI:33019"/>
        <dbReference type="ChEBI" id="CHEBI:43474"/>
        <dbReference type="ChEBI" id="CHEBI:58702"/>
        <dbReference type="ChEBI" id="CHEBI:456215"/>
        <dbReference type="EC" id="2.7.9.1"/>
    </reaction>
</comment>
<comment type="cofactor">
    <cofactor evidence="2">
        <name>Mg(2+)</name>
        <dbReference type="ChEBI" id="CHEBI:18420"/>
    </cofactor>
</comment>
<comment type="subcellular location">
    <subcellularLocation>
        <location>Cytoplasm</location>
    </subcellularLocation>
</comment>
<comment type="miscellaneous">
    <text>This gene codes only for the short cytoplasmic isoform of PPDK.</text>
</comment>
<comment type="similarity">
    <text evidence="3">Belongs to the PEP-utilizing enzyme family.</text>
</comment>
<comment type="sequence caution" evidence="3">
    <conflict type="erroneous gene model prediction">
        <sequence resource="EMBL-CDS" id="ABF96770"/>
    </conflict>
</comment>
<comment type="sequence caution" evidence="3">
    <conflict type="erroneous gene model prediction">
        <sequence resource="EMBL-CDS" id="BAF12344"/>
    </conflict>
</comment>
<protein>
    <recommendedName>
        <fullName>Pyruvate, phosphate dikinase 2</fullName>
        <ecNumber>2.7.9.1</ecNumber>
    </recommendedName>
    <alternativeName>
        <fullName>Pyruvate, orthophosphate dikinase 2</fullName>
    </alternativeName>
</protein>
<proteinExistence type="inferred from homology"/>
<organism>
    <name type="scientific">Oryza sativa subsp. japonica</name>
    <name type="common">Rice</name>
    <dbReference type="NCBI Taxonomy" id="39947"/>
    <lineage>
        <taxon>Eukaryota</taxon>
        <taxon>Viridiplantae</taxon>
        <taxon>Streptophyta</taxon>
        <taxon>Embryophyta</taxon>
        <taxon>Tracheophyta</taxon>
        <taxon>Spermatophyta</taxon>
        <taxon>Magnoliopsida</taxon>
        <taxon>Liliopsida</taxon>
        <taxon>Poales</taxon>
        <taxon>Poaceae</taxon>
        <taxon>BOP clade</taxon>
        <taxon>Oryzoideae</taxon>
        <taxon>Oryzeae</taxon>
        <taxon>Oryzinae</taxon>
        <taxon>Oryza</taxon>
        <taxon>Oryza sativa</taxon>
    </lineage>
</organism>
<reference key="1">
    <citation type="journal article" date="2005" name="Genome Res.">
        <title>Sequence, annotation, and analysis of synteny between rice chromosome 3 and diverged grass species.</title>
        <authorList>
            <consortium name="The rice chromosome 3 sequencing consortium"/>
            <person name="Buell C.R."/>
            <person name="Yuan Q."/>
            <person name="Ouyang S."/>
            <person name="Liu J."/>
            <person name="Zhu W."/>
            <person name="Wang A."/>
            <person name="Maiti R."/>
            <person name="Haas B."/>
            <person name="Wortman J."/>
            <person name="Pertea M."/>
            <person name="Jones K.M."/>
            <person name="Kim M."/>
            <person name="Overton L."/>
            <person name="Tsitrin T."/>
            <person name="Fadrosh D."/>
            <person name="Bera J."/>
            <person name="Weaver B."/>
            <person name="Jin S."/>
            <person name="Johri S."/>
            <person name="Reardon M."/>
            <person name="Webb K."/>
            <person name="Hill J."/>
            <person name="Moffat K."/>
            <person name="Tallon L."/>
            <person name="Van Aken S."/>
            <person name="Lewis M."/>
            <person name="Utterback T."/>
            <person name="Feldblyum T."/>
            <person name="Zismann V."/>
            <person name="Iobst S."/>
            <person name="Hsiao J."/>
            <person name="de Vazeille A.R."/>
            <person name="Salzberg S.L."/>
            <person name="White O."/>
            <person name="Fraser C.M."/>
            <person name="Yu Y."/>
            <person name="Kim H."/>
            <person name="Rambo T."/>
            <person name="Currie J."/>
            <person name="Collura K."/>
            <person name="Kernodle-Thompson S."/>
            <person name="Wei F."/>
            <person name="Kudrna K."/>
            <person name="Ammiraju J.S.S."/>
            <person name="Luo M."/>
            <person name="Goicoechea J.L."/>
            <person name="Wing R.A."/>
            <person name="Henry D."/>
            <person name="Oates R."/>
            <person name="Palmer M."/>
            <person name="Pries G."/>
            <person name="Saski C."/>
            <person name="Simmons J."/>
            <person name="Soderlund C."/>
            <person name="Nelson W."/>
            <person name="de la Bastide M."/>
            <person name="Spiegel L."/>
            <person name="Nascimento L."/>
            <person name="Huang E."/>
            <person name="Preston R."/>
            <person name="Zutavern T."/>
            <person name="Palmer L."/>
            <person name="O'Shaughnessy A."/>
            <person name="Dike S."/>
            <person name="McCombie W.R."/>
            <person name="Minx P."/>
            <person name="Cordum H."/>
            <person name="Wilson R."/>
            <person name="Jin W."/>
            <person name="Lee H.R."/>
            <person name="Jiang J."/>
            <person name="Jackson S."/>
        </authorList>
    </citation>
    <scope>NUCLEOTIDE SEQUENCE [LARGE SCALE GENOMIC DNA]</scope>
    <source>
        <strain>cv. Nipponbare</strain>
    </source>
</reference>
<reference key="2">
    <citation type="journal article" date="2005" name="Nature">
        <title>The map-based sequence of the rice genome.</title>
        <authorList>
            <consortium name="International rice genome sequencing project (IRGSP)"/>
        </authorList>
    </citation>
    <scope>NUCLEOTIDE SEQUENCE [LARGE SCALE GENOMIC DNA]</scope>
    <source>
        <strain>cv. Nipponbare</strain>
    </source>
</reference>
<reference key="3">
    <citation type="journal article" date="2008" name="Nucleic Acids Res.">
        <title>The rice annotation project database (RAP-DB): 2008 update.</title>
        <authorList>
            <consortium name="The rice annotation project (RAP)"/>
        </authorList>
    </citation>
    <scope>GENOME REANNOTATION</scope>
    <source>
        <strain>cv. Nipponbare</strain>
    </source>
</reference>
<reference key="4">
    <citation type="journal article" date="2013" name="Rice">
        <title>Improvement of the Oryza sativa Nipponbare reference genome using next generation sequence and optical map data.</title>
        <authorList>
            <person name="Kawahara Y."/>
            <person name="de la Bastide M."/>
            <person name="Hamilton J.P."/>
            <person name="Kanamori H."/>
            <person name="McCombie W.R."/>
            <person name="Ouyang S."/>
            <person name="Schwartz D.C."/>
            <person name="Tanaka T."/>
            <person name="Wu J."/>
            <person name="Zhou S."/>
            <person name="Childs K.L."/>
            <person name="Davidson R.M."/>
            <person name="Lin H."/>
            <person name="Quesada-Ocampo L."/>
            <person name="Vaillancourt B."/>
            <person name="Sakai H."/>
            <person name="Lee S.S."/>
            <person name="Kim J."/>
            <person name="Numa H."/>
            <person name="Itoh T."/>
            <person name="Buell C.R."/>
            <person name="Matsumoto T."/>
        </authorList>
    </citation>
    <scope>GENOME REANNOTATION</scope>
    <source>
        <strain>cv. Nipponbare</strain>
    </source>
</reference>
<reference key="5">
    <citation type="journal article" date="2005" name="PLoS Biol.">
        <title>The genomes of Oryza sativa: a history of duplications.</title>
        <authorList>
            <person name="Yu J."/>
            <person name="Wang J."/>
            <person name="Lin W."/>
            <person name="Li S."/>
            <person name="Li H."/>
            <person name="Zhou J."/>
            <person name="Ni P."/>
            <person name="Dong W."/>
            <person name="Hu S."/>
            <person name="Zeng C."/>
            <person name="Zhang J."/>
            <person name="Zhang Y."/>
            <person name="Li R."/>
            <person name="Xu Z."/>
            <person name="Li S."/>
            <person name="Li X."/>
            <person name="Zheng H."/>
            <person name="Cong L."/>
            <person name="Lin L."/>
            <person name="Yin J."/>
            <person name="Geng J."/>
            <person name="Li G."/>
            <person name="Shi J."/>
            <person name="Liu J."/>
            <person name="Lv H."/>
            <person name="Li J."/>
            <person name="Wang J."/>
            <person name="Deng Y."/>
            <person name="Ran L."/>
            <person name="Shi X."/>
            <person name="Wang X."/>
            <person name="Wu Q."/>
            <person name="Li C."/>
            <person name="Ren X."/>
            <person name="Wang J."/>
            <person name="Wang X."/>
            <person name="Li D."/>
            <person name="Liu D."/>
            <person name="Zhang X."/>
            <person name="Ji Z."/>
            <person name="Zhao W."/>
            <person name="Sun Y."/>
            <person name="Zhang Z."/>
            <person name="Bao J."/>
            <person name="Han Y."/>
            <person name="Dong L."/>
            <person name="Ji J."/>
            <person name="Chen P."/>
            <person name="Wu S."/>
            <person name="Liu J."/>
            <person name="Xiao Y."/>
            <person name="Bu D."/>
            <person name="Tan J."/>
            <person name="Yang L."/>
            <person name="Ye C."/>
            <person name="Zhang J."/>
            <person name="Xu J."/>
            <person name="Zhou Y."/>
            <person name="Yu Y."/>
            <person name="Zhang B."/>
            <person name="Zhuang S."/>
            <person name="Wei H."/>
            <person name="Liu B."/>
            <person name="Lei M."/>
            <person name="Yu H."/>
            <person name="Li Y."/>
            <person name="Xu H."/>
            <person name="Wei S."/>
            <person name="He X."/>
            <person name="Fang L."/>
            <person name="Zhang Z."/>
            <person name="Zhang Y."/>
            <person name="Huang X."/>
            <person name="Su Z."/>
            <person name="Tong W."/>
            <person name="Li J."/>
            <person name="Tong Z."/>
            <person name="Li S."/>
            <person name="Ye J."/>
            <person name="Wang L."/>
            <person name="Fang L."/>
            <person name="Lei T."/>
            <person name="Chen C.-S."/>
            <person name="Chen H.-C."/>
            <person name="Xu Z."/>
            <person name="Li H."/>
            <person name="Huang H."/>
            <person name="Zhang F."/>
            <person name="Xu H."/>
            <person name="Li N."/>
            <person name="Zhao C."/>
            <person name="Li S."/>
            <person name="Dong L."/>
            <person name="Huang Y."/>
            <person name="Li L."/>
            <person name="Xi Y."/>
            <person name="Qi Q."/>
            <person name="Li W."/>
            <person name="Zhang B."/>
            <person name="Hu W."/>
            <person name="Zhang Y."/>
            <person name="Tian X."/>
            <person name="Jiao Y."/>
            <person name="Liang X."/>
            <person name="Jin J."/>
            <person name="Gao L."/>
            <person name="Zheng W."/>
            <person name="Hao B."/>
            <person name="Liu S.-M."/>
            <person name="Wang W."/>
            <person name="Yuan L."/>
            <person name="Cao M."/>
            <person name="McDermott J."/>
            <person name="Samudrala R."/>
            <person name="Wang J."/>
            <person name="Wong G.K.-S."/>
            <person name="Yang H."/>
        </authorList>
    </citation>
    <scope>NUCLEOTIDE SEQUENCE [LARGE SCALE GENOMIC DNA]</scope>
    <source>
        <strain>cv. Nipponbare</strain>
    </source>
</reference>
<sequence>MAPAAHRDGAAEAVGQRVFHFGKGRSDGNKTMKDLLGGKGANLAEMASIGLSVPPGFTVSTEACQQYQAQKAMPAGLWDEILAALTWVEGNMGAVLGDPRRPLLLSVRSGAAVSMPGMMDTVLNLGLNDHVVAGLAHRSGERFAYDSYRRFLDMFGNVVMDIPHSLFEEKIEAMKAALGLRNDTELTARDLKELVAQYKNVYVEAKGEEFPSDPKKQLHLSVLAVFNSWDSARAKKYRSINQITGLKGTAVNVQCMVFGNMGDTSGTGVLFTRNPSTGERKLYGEFLVNAQGEDVVAGIRTPQDLDTMKDCMPEPYAELVENCKILESHYKEMMDIEFTVQENRLWMLQCRTGKRTGKGAVKIAVDMVNEGLIDRRSAIKMVEPRHLDQLLHPQFESPSSYGDKVIATGLPASPGAAVGQIVFTADDAEAWHAQGKSVILVRTETSPEDVGGMNAAAGILTARGGMTSHAAVVARGWGKCCVAGCSGIRVNDAEKVVLVADKVLCEGEWLSLNGSTGEVILGKLPLSPPALSGDLGEFMSWVDEVKKLKVKANADTPADALTARNNGAEGIGLCRTEHMFFSSDERIKAMRQMIMAETIEHRQIALDRLLPYQRLDFEGIFRAMDGLPVTIRLLDPPLHEFLPEGNVEDMVRLLSSGNVYTQEEILTRIEKLSEVNPMLGFRGCRLGISYPELTAMQARAIFEAAISMTEQGVKVFPEIMVPLIGTPQELAQQVDVIREVAEKVFANAETTISYKIGSMIEVPRAALIADEIAALAEFFSFGTNDLTQMTFGYSRDDVGKFLPTYLSKGILQNDPFEVFDQKGVGELVKVAVERGRKARPDLEVGICGEHGGEPSSVAFFAKVGLNYVSCSPFRVPIARLAAAQVML</sequence>
<keyword id="KW-0067">ATP-binding</keyword>
<keyword id="KW-0963">Cytoplasm</keyword>
<keyword id="KW-0418">Kinase</keyword>
<keyword id="KW-0460">Magnesium</keyword>
<keyword id="KW-0479">Metal-binding</keyword>
<keyword id="KW-0547">Nucleotide-binding</keyword>
<keyword id="KW-0597">Phosphoprotein</keyword>
<keyword id="KW-0670">Pyruvate</keyword>
<keyword id="KW-1185">Reference proteome</keyword>
<keyword id="KW-0808">Transferase</keyword>
<accession>Q75KR1</accession>
<accession>Q0DQZ4</accession>
<accession>Q10J68</accession>
<gene>
    <name type="primary">PPDK2</name>
    <name type="synonym">CPDK2</name>
    <name type="ordered locus">Os03g0432100</name>
    <name type="ordered locus">LOC_Os03g31750</name>
    <name type="ORF">OsJ_010907</name>
    <name type="ORF">OSJNBa0036E17.10</name>
</gene>
<dbReference type="EC" id="2.7.9.1"/>
<dbReference type="EMBL" id="AC099041">
    <property type="protein sequence ID" value="AAR87148.1"/>
    <property type="molecule type" value="Genomic_DNA"/>
</dbReference>
<dbReference type="EMBL" id="DP000009">
    <property type="protein sequence ID" value="ABF96769.1"/>
    <property type="molecule type" value="Genomic_DNA"/>
</dbReference>
<dbReference type="EMBL" id="DP000009">
    <property type="protein sequence ID" value="ABF96770.1"/>
    <property type="status" value="ALT_SEQ"/>
    <property type="molecule type" value="Genomic_DNA"/>
</dbReference>
<dbReference type="EMBL" id="AP008209">
    <property type="protein sequence ID" value="BAF12344.1"/>
    <property type="status" value="ALT_SEQ"/>
    <property type="molecule type" value="Genomic_DNA"/>
</dbReference>
<dbReference type="EMBL" id="AP014959">
    <property type="status" value="NOT_ANNOTATED_CDS"/>
    <property type="molecule type" value="Genomic_DNA"/>
</dbReference>
<dbReference type="EMBL" id="CM000140">
    <property type="protein sequence ID" value="EAZ27424.1"/>
    <property type="molecule type" value="Genomic_DNA"/>
</dbReference>
<dbReference type="RefSeq" id="XP_015633061.1">
    <property type="nucleotide sequence ID" value="XM_015777575.1"/>
</dbReference>
<dbReference type="SMR" id="Q75KR1"/>
<dbReference type="FunCoup" id="Q75KR1">
    <property type="interactions" value="376"/>
</dbReference>
<dbReference type="STRING" id="39947.Q75KR1"/>
<dbReference type="iPTMnet" id="Q75KR1"/>
<dbReference type="PaxDb" id="39947-Q75KR1"/>
<dbReference type="KEGG" id="dosa:Os03g0432100"/>
<dbReference type="InParanoid" id="Q75KR1"/>
<dbReference type="OrthoDB" id="6123450at2759"/>
<dbReference type="BRENDA" id="2.7.9.1">
    <property type="organism ID" value="8948"/>
</dbReference>
<dbReference type="Proteomes" id="UP000000763">
    <property type="component" value="Chromosome 3"/>
</dbReference>
<dbReference type="Proteomes" id="UP000007752">
    <property type="component" value="Chromosome 3"/>
</dbReference>
<dbReference type="Proteomes" id="UP000059680">
    <property type="component" value="Chromosome 3"/>
</dbReference>
<dbReference type="GO" id="GO:0005737">
    <property type="term" value="C:cytoplasm"/>
    <property type="evidence" value="ECO:0007669"/>
    <property type="project" value="UniProtKB-SubCell"/>
</dbReference>
<dbReference type="GO" id="GO:0005524">
    <property type="term" value="F:ATP binding"/>
    <property type="evidence" value="ECO:0007669"/>
    <property type="project" value="UniProtKB-KW"/>
</dbReference>
<dbReference type="GO" id="GO:0016301">
    <property type="term" value="F:kinase activity"/>
    <property type="evidence" value="ECO:0007669"/>
    <property type="project" value="UniProtKB-KW"/>
</dbReference>
<dbReference type="GO" id="GO:0046872">
    <property type="term" value="F:metal ion binding"/>
    <property type="evidence" value="ECO:0007669"/>
    <property type="project" value="UniProtKB-KW"/>
</dbReference>
<dbReference type="GO" id="GO:0050242">
    <property type="term" value="F:pyruvate, phosphate dikinase activity"/>
    <property type="evidence" value="ECO:0007669"/>
    <property type="project" value="UniProtKB-EC"/>
</dbReference>
<dbReference type="FunFam" id="3.20.20.60:FF:000040">
    <property type="entry name" value="Pyruvate, phosphate dikinase, chloroplastic"/>
    <property type="match status" value="1"/>
</dbReference>
<dbReference type="FunFam" id="3.30.470.20:FF:000038">
    <property type="entry name" value="Pyruvate, phosphate dikinase, chloroplastic"/>
    <property type="match status" value="1"/>
</dbReference>
<dbReference type="FunFam" id="3.50.30.10:FF:000009">
    <property type="entry name" value="Pyruvate, phosphate dikinase, chloroplastic"/>
    <property type="match status" value="1"/>
</dbReference>
<dbReference type="Gene3D" id="1.20.80.30">
    <property type="match status" value="1"/>
</dbReference>
<dbReference type="Gene3D" id="3.30.1490.20">
    <property type="entry name" value="ATP-grasp fold, A domain"/>
    <property type="match status" value="1"/>
</dbReference>
<dbReference type="Gene3D" id="3.30.470.20">
    <property type="entry name" value="ATP-grasp fold, B domain"/>
    <property type="match status" value="1"/>
</dbReference>
<dbReference type="Gene3D" id="3.20.20.60">
    <property type="entry name" value="Phosphoenolpyruvate-binding domains"/>
    <property type="match status" value="1"/>
</dbReference>
<dbReference type="Gene3D" id="3.50.30.10">
    <property type="entry name" value="Phosphohistidine domain"/>
    <property type="match status" value="1"/>
</dbReference>
<dbReference type="Gene3D" id="1.10.189.10">
    <property type="entry name" value="Pyruvate Phosphate Dikinase, domain 2"/>
    <property type="match status" value="1"/>
</dbReference>
<dbReference type="InterPro" id="IPR013815">
    <property type="entry name" value="ATP_grasp_subdomain_1"/>
</dbReference>
<dbReference type="InterPro" id="IPR008279">
    <property type="entry name" value="PEP-util_enz_mobile_dom"/>
</dbReference>
<dbReference type="InterPro" id="IPR018274">
    <property type="entry name" value="PEP_util_AS"/>
</dbReference>
<dbReference type="InterPro" id="IPR000121">
    <property type="entry name" value="PEP_util_C"/>
</dbReference>
<dbReference type="InterPro" id="IPR023151">
    <property type="entry name" value="PEP_util_CS"/>
</dbReference>
<dbReference type="InterPro" id="IPR036637">
    <property type="entry name" value="Phosphohistidine_dom_sf"/>
</dbReference>
<dbReference type="InterPro" id="IPR002192">
    <property type="entry name" value="PPDK_AMP/ATP-bd"/>
</dbReference>
<dbReference type="InterPro" id="IPR010121">
    <property type="entry name" value="Pyruvate_phosphate_dikinase"/>
</dbReference>
<dbReference type="InterPro" id="IPR015813">
    <property type="entry name" value="Pyrv/PenolPyrv_kinase-like_dom"/>
</dbReference>
<dbReference type="InterPro" id="IPR040442">
    <property type="entry name" value="Pyrv_kinase-like_dom_sf"/>
</dbReference>
<dbReference type="NCBIfam" id="NF004531">
    <property type="entry name" value="PRK05878.1"/>
    <property type="match status" value="1"/>
</dbReference>
<dbReference type="NCBIfam" id="TIGR01828">
    <property type="entry name" value="pyru_phos_dikin"/>
    <property type="match status" value="1"/>
</dbReference>
<dbReference type="PANTHER" id="PTHR22931">
    <property type="entry name" value="PHOSPHOENOLPYRUVATE DIKINASE-RELATED"/>
    <property type="match status" value="1"/>
</dbReference>
<dbReference type="PANTHER" id="PTHR22931:SF39">
    <property type="entry name" value="PYRUVATE, PHOSPHATE DIKINASE 2"/>
    <property type="match status" value="1"/>
</dbReference>
<dbReference type="Pfam" id="PF00391">
    <property type="entry name" value="PEP-utilizers"/>
    <property type="match status" value="1"/>
</dbReference>
<dbReference type="Pfam" id="PF02896">
    <property type="entry name" value="PEP-utilizers_C"/>
    <property type="match status" value="1"/>
</dbReference>
<dbReference type="Pfam" id="PF01326">
    <property type="entry name" value="PPDK_N"/>
    <property type="match status" value="3"/>
</dbReference>
<dbReference type="PIRSF" id="PIRSF000853">
    <property type="entry name" value="PPDK"/>
    <property type="match status" value="1"/>
</dbReference>
<dbReference type="SUPFAM" id="SSF56059">
    <property type="entry name" value="Glutathione synthetase ATP-binding domain-like"/>
    <property type="match status" value="1"/>
</dbReference>
<dbReference type="SUPFAM" id="SSF51621">
    <property type="entry name" value="Phosphoenolpyruvate/pyruvate domain"/>
    <property type="match status" value="1"/>
</dbReference>
<dbReference type="SUPFAM" id="SSF52009">
    <property type="entry name" value="Phosphohistidine domain"/>
    <property type="match status" value="1"/>
</dbReference>
<dbReference type="PROSITE" id="PS00742">
    <property type="entry name" value="PEP_ENZYMES_2"/>
    <property type="match status" value="1"/>
</dbReference>
<dbReference type="PROSITE" id="PS00370">
    <property type="entry name" value="PEP_ENZYMES_PHOS_SITE"/>
    <property type="match status" value="1"/>
</dbReference>
<feature type="chain" id="PRO_0000343517" description="Pyruvate, phosphate dikinase 2">
    <location>
        <begin position="1"/>
        <end position="887"/>
    </location>
</feature>
<feature type="active site" description="Tele-phosphohistidine intermediate" evidence="2">
    <location>
        <position position="469"/>
    </location>
</feature>
<feature type="active site" description="Proton donor" evidence="2">
    <location>
        <position position="847"/>
    </location>
</feature>
<feature type="binding site" evidence="2">
    <location>
        <position position="575"/>
    </location>
    <ligand>
        <name>substrate</name>
    </ligand>
</feature>
<feature type="binding site" evidence="2">
    <location>
        <position position="632"/>
    </location>
    <ligand>
        <name>substrate</name>
    </ligand>
</feature>
<feature type="binding site" evidence="2">
    <location>
        <position position="761"/>
    </location>
    <ligand>
        <name>Mg(2+)</name>
        <dbReference type="ChEBI" id="CHEBI:18420"/>
    </ligand>
</feature>
<feature type="binding site" evidence="2">
    <location>
        <position position="761"/>
    </location>
    <ligand>
        <name>substrate</name>
    </ligand>
</feature>
<feature type="binding site" evidence="2">
    <location>
        <position position="782"/>
    </location>
    <ligand>
        <name>substrate</name>
    </ligand>
</feature>
<feature type="binding site" evidence="2">
    <location>
        <position position="783"/>
    </location>
    <ligand>
        <name>substrate</name>
    </ligand>
</feature>
<feature type="binding site" evidence="2">
    <location>
        <position position="784"/>
    </location>
    <ligand>
        <name>substrate</name>
    </ligand>
</feature>
<feature type="binding site" evidence="2">
    <location>
        <position position="785"/>
    </location>
    <ligand>
        <name>Mg(2+)</name>
        <dbReference type="ChEBI" id="CHEBI:18420"/>
    </ligand>
</feature>
<feature type="binding site" evidence="2">
    <location>
        <position position="785"/>
    </location>
    <ligand>
        <name>substrate</name>
    </ligand>
</feature>
<feature type="modified residue" description="Phosphothreonine; by PDRP1" evidence="1">
    <location>
        <position position="467"/>
    </location>
</feature>